<gene>
    <name type="ordered locus">HI_1250</name>
</gene>
<feature type="chain" id="PRO_0000078014" description="Uncharacterized protein HI_1250">
    <location>
        <begin position="1"/>
        <end position="101"/>
    </location>
</feature>
<keyword id="KW-1185">Reference proteome</keyword>
<proteinExistence type="predicted"/>
<name>Y1250_HAEIN</name>
<reference key="1">
    <citation type="journal article" date="1995" name="Science">
        <title>Whole-genome random sequencing and assembly of Haemophilus influenzae Rd.</title>
        <authorList>
            <person name="Fleischmann R.D."/>
            <person name="Adams M.D."/>
            <person name="White O."/>
            <person name="Clayton R.A."/>
            <person name="Kirkness E.F."/>
            <person name="Kerlavage A.R."/>
            <person name="Bult C.J."/>
            <person name="Tomb J.-F."/>
            <person name="Dougherty B.A."/>
            <person name="Merrick J.M."/>
            <person name="McKenney K."/>
            <person name="Sutton G.G."/>
            <person name="FitzHugh W."/>
            <person name="Fields C.A."/>
            <person name="Gocayne J.D."/>
            <person name="Scott J.D."/>
            <person name="Shirley R."/>
            <person name="Liu L.-I."/>
            <person name="Glodek A."/>
            <person name="Kelley J.M."/>
            <person name="Weidman J.F."/>
            <person name="Phillips C.A."/>
            <person name="Spriggs T."/>
            <person name="Hedblom E."/>
            <person name="Cotton M.D."/>
            <person name="Utterback T.R."/>
            <person name="Hanna M.C."/>
            <person name="Nguyen D.T."/>
            <person name="Saudek D.M."/>
            <person name="Brandon R.C."/>
            <person name="Fine L.D."/>
            <person name="Fritchman J.L."/>
            <person name="Fuhrmann J.L."/>
            <person name="Geoghagen N.S.M."/>
            <person name="Gnehm C.L."/>
            <person name="McDonald L.A."/>
            <person name="Small K.V."/>
            <person name="Fraser C.M."/>
            <person name="Smith H.O."/>
            <person name="Venter J.C."/>
        </authorList>
    </citation>
    <scope>NUCLEOTIDE SEQUENCE [LARGE SCALE GENOMIC DNA]</scope>
    <source>
        <strain>ATCC 51907 / DSM 11121 / KW20 / Rd</strain>
    </source>
</reference>
<protein>
    <recommendedName>
        <fullName>Uncharacterized protein HI_1250</fullName>
    </recommendedName>
</protein>
<dbReference type="EMBL" id="L42023">
    <property type="protein sequence ID" value="AAC22909.1"/>
    <property type="molecule type" value="Genomic_DNA"/>
</dbReference>
<dbReference type="PIR" id="C64023">
    <property type="entry name" value="C64023"/>
</dbReference>
<dbReference type="RefSeq" id="NP_439406.1">
    <property type="nucleotide sequence ID" value="NC_000907.1"/>
</dbReference>
<dbReference type="SMR" id="P44138"/>
<dbReference type="STRING" id="71421.HI_1250"/>
<dbReference type="EnsemblBacteria" id="AAC22909">
    <property type="protein sequence ID" value="AAC22909"/>
    <property type="gene ID" value="HI_1250"/>
</dbReference>
<dbReference type="KEGG" id="hin:HI_1250"/>
<dbReference type="PATRIC" id="fig|71421.8.peg.1302"/>
<dbReference type="eggNOG" id="COG3549">
    <property type="taxonomic scope" value="Bacteria"/>
</dbReference>
<dbReference type="HOGENOM" id="CLU_155111_1_0_6"/>
<dbReference type="OrthoDB" id="9801102at2"/>
<dbReference type="PhylomeDB" id="P44138"/>
<dbReference type="BioCyc" id="HINF71421:G1GJ1-1281-MONOMER"/>
<dbReference type="Proteomes" id="UP000000579">
    <property type="component" value="Chromosome"/>
</dbReference>
<dbReference type="Gene3D" id="3.30.2310.20">
    <property type="entry name" value="RelE-like"/>
    <property type="match status" value="1"/>
</dbReference>
<dbReference type="InterPro" id="IPR007711">
    <property type="entry name" value="HigB-1"/>
</dbReference>
<dbReference type="InterPro" id="IPR035093">
    <property type="entry name" value="RelE/ParE_toxin_dom_sf"/>
</dbReference>
<dbReference type="PANTHER" id="PTHR40266">
    <property type="entry name" value="TOXIN HIGB-1"/>
    <property type="match status" value="1"/>
</dbReference>
<dbReference type="PANTHER" id="PTHR40266:SF2">
    <property type="entry name" value="TOXIN HIGB-1"/>
    <property type="match status" value="1"/>
</dbReference>
<dbReference type="Pfam" id="PF05015">
    <property type="entry name" value="HigB-like_toxin"/>
    <property type="match status" value="1"/>
</dbReference>
<dbReference type="SUPFAM" id="SSF143011">
    <property type="entry name" value="RelE-like"/>
    <property type="match status" value="1"/>
</dbReference>
<sequence length="101" mass="12249">MFNLKREHFRDDYLYRFYQYGDTHSKIPSNLYKVLARKLDMISASENINDLRSPPANHLELLEPKENKIYSIRVNKQYCLIFKYENNEVNNLYLDPHSYNL</sequence>
<organism>
    <name type="scientific">Haemophilus influenzae (strain ATCC 51907 / DSM 11121 / KW20 / Rd)</name>
    <dbReference type="NCBI Taxonomy" id="71421"/>
    <lineage>
        <taxon>Bacteria</taxon>
        <taxon>Pseudomonadati</taxon>
        <taxon>Pseudomonadota</taxon>
        <taxon>Gammaproteobacteria</taxon>
        <taxon>Pasteurellales</taxon>
        <taxon>Pasteurellaceae</taxon>
        <taxon>Haemophilus</taxon>
    </lineage>
</organism>
<accession>P44138</accession>